<sequence length="244" mass="26412">MIVIPAIDLREGRCVRLFRGDFARATVYSDDPIEMAQRWASAGARWLHVVDLDGARLGQPVQHELIERVIRAVPDVAVQVGGGVRTLDAVERLLVGGAARVVIGTAALERPDMLREALARFGVERVVVAVDSRDGWVATHGWETVQAIRVEEVVHRVVLLGVRRVLATDVTRDGTLTRPNLELMGRLAALGVTVIASGGVGSRSDLEALARVPGVEAAIVGRALYEGRVRFERPEDWVIGAEAA</sequence>
<protein>
    <recommendedName>
        <fullName evidence="1">1-(5-phosphoribosyl)-5-[(5-phosphoribosylamino)methylideneamino] imidazole-4-carboxamide isomerase</fullName>
        <ecNumber evidence="1">5.3.1.16</ecNumber>
    </recommendedName>
    <alternativeName>
        <fullName evidence="1">Phosphoribosylformimino-5-aminoimidazole carboxamide ribotide isomerase</fullName>
    </alternativeName>
</protein>
<keyword id="KW-0028">Amino-acid biosynthesis</keyword>
<keyword id="KW-0963">Cytoplasm</keyword>
<keyword id="KW-0368">Histidine biosynthesis</keyword>
<keyword id="KW-0413">Isomerase</keyword>
<keyword id="KW-1185">Reference proteome</keyword>
<evidence type="ECO:0000255" key="1">
    <source>
        <dbReference type="HAMAP-Rule" id="MF_01014"/>
    </source>
</evidence>
<comment type="catalytic activity">
    <reaction evidence="1">
        <text>1-(5-phospho-beta-D-ribosyl)-5-[(5-phospho-beta-D-ribosylamino)methylideneamino]imidazole-4-carboxamide = 5-[(5-phospho-1-deoxy-D-ribulos-1-ylimino)methylamino]-1-(5-phospho-beta-D-ribosyl)imidazole-4-carboxamide</text>
        <dbReference type="Rhea" id="RHEA:15469"/>
        <dbReference type="ChEBI" id="CHEBI:58435"/>
        <dbReference type="ChEBI" id="CHEBI:58525"/>
        <dbReference type="EC" id="5.3.1.16"/>
    </reaction>
</comment>
<comment type="pathway">
    <text evidence="1">Amino-acid biosynthesis; L-histidine biosynthesis; L-histidine from 5-phospho-alpha-D-ribose 1-diphosphate: step 4/9.</text>
</comment>
<comment type="subcellular location">
    <subcellularLocation>
        <location evidence="1">Cytoplasm</location>
    </subcellularLocation>
</comment>
<comment type="similarity">
    <text evidence="1">Belongs to the HisA/HisF family.</text>
</comment>
<name>HIS4_THERP</name>
<proteinExistence type="inferred from homology"/>
<gene>
    <name evidence="1" type="primary">hisA</name>
    <name type="ordered locus">trd_0181</name>
</gene>
<feature type="chain" id="PRO_1000148990" description="1-(5-phosphoribosyl)-5-[(5-phosphoribosylamino)methylideneamino] imidazole-4-carboxamide isomerase">
    <location>
        <begin position="1"/>
        <end position="244"/>
    </location>
</feature>
<feature type="active site" description="Proton acceptor" evidence="1">
    <location>
        <position position="8"/>
    </location>
</feature>
<feature type="active site" description="Proton donor" evidence="1">
    <location>
        <position position="131"/>
    </location>
</feature>
<dbReference type="EC" id="5.3.1.16" evidence="1"/>
<dbReference type="EMBL" id="CP001275">
    <property type="protein sequence ID" value="ACM05521.1"/>
    <property type="molecule type" value="Genomic_DNA"/>
</dbReference>
<dbReference type="RefSeq" id="WP_012641594.1">
    <property type="nucleotide sequence ID" value="NC_011959.1"/>
</dbReference>
<dbReference type="SMR" id="B9KXJ4"/>
<dbReference type="STRING" id="309801.trd_0181"/>
<dbReference type="KEGG" id="tro:trd_0181"/>
<dbReference type="eggNOG" id="COG0106">
    <property type="taxonomic scope" value="Bacteria"/>
</dbReference>
<dbReference type="HOGENOM" id="CLU_048577_1_1_0"/>
<dbReference type="OrthoDB" id="9781903at2"/>
<dbReference type="UniPathway" id="UPA00031">
    <property type="reaction ID" value="UER00009"/>
</dbReference>
<dbReference type="Proteomes" id="UP000000447">
    <property type="component" value="Chromosome"/>
</dbReference>
<dbReference type="GO" id="GO:0005737">
    <property type="term" value="C:cytoplasm"/>
    <property type="evidence" value="ECO:0007669"/>
    <property type="project" value="UniProtKB-SubCell"/>
</dbReference>
<dbReference type="GO" id="GO:0003949">
    <property type="term" value="F:1-(5-phosphoribosyl)-5-[(5-phosphoribosylamino)methylideneamino]imidazole-4-carboxamide isomerase activity"/>
    <property type="evidence" value="ECO:0007669"/>
    <property type="project" value="UniProtKB-UniRule"/>
</dbReference>
<dbReference type="GO" id="GO:0000105">
    <property type="term" value="P:L-histidine biosynthetic process"/>
    <property type="evidence" value="ECO:0007669"/>
    <property type="project" value="UniProtKB-UniRule"/>
</dbReference>
<dbReference type="GO" id="GO:0000162">
    <property type="term" value="P:L-tryptophan biosynthetic process"/>
    <property type="evidence" value="ECO:0007669"/>
    <property type="project" value="TreeGrafter"/>
</dbReference>
<dbReference type="CDD" id="cd04732">
    <property type="entry name" value="HisA"/>
    <property type="match status" value="1"/>
</dbReference>
<dbReference type="FunFam" id="3.20.20.70:FF:000009">
    <property type="entry name" value="1-(5-phosphoribosyl)-5-[(5-phosphoribosylamino)methylideneamino] imidazole-4-carboxamide isomerase"/>
    <property type="match status" value="1"/>
</dbReference>
<dbReference type="Gene3D" id="3.20.20.70">
    <property type="entry name" value="Aldolase class I"/>
    <property type="match status" value="1"/>
</dbReference>
<dbReference type="HAMAP" id="MF_01014">
    <property type="entry name" value="HisA"/>
    <property type="match status" value="1"/>
</dbReference>
<dbReference type="InterPro" id="IPR013785">
    <property type="entry name" value="Aldolase_TIM"/>
</dbReference>
<dbReference type="InterPro" id="IPR006062">
    <property type="entry name" value="His_biosynth"/>
</dbReference>
<dbReference type="InterPro" id="IPR006063">
    <property type="entry name" value="HisA_bact_arch"/>
</dbReference>
<dbReference type="InterPro" id="IPR044524">
    <property type="entry name" value="Isoase_HisA-like"/>
</dbReference>
<dbReference type="InterPro" id="IPR023016">
    <property type="entry name" value="Isoase_HisA-like_bact"/>
</dbReference>
<dbReference type="InterPro" id="IPR011060">
    <property type="entry name" value="RibuloseP-bd_barrel"/>
</dbReference>
<dbReference type="NCBIfam" id="TIGR00007">
    <property type="entry name" value="1-(5-phosphoribosyl)-5-[(5-phosphoribosylamino)methylideneamino]imidazole-4-carboxamide isomerase"/>
    <property type="match status" value="1"/>
</dbReference>
<dbReference type="PANTHER" id="PTHR43090">
    <property type="entry name" value="1-(5-PHOSPHORIBOSYL)-5-[(5-PHOSPHORIBOSYLAMINO)METHYLIDENEAMINO] IMIDAZOLE-4-CARBOXAMIDE ISOMERASE"/>
    <property type="match status" value="1"/>
</dbReference>
<dbReference type="PANTHER" id="PTHR43090:SF2">
    <property type="entry name" value="1-(5-PHOSPHORIBOSYL)-5-[(5-PHOSPHORIBOSYLAMINO)METHYLIDENEAMINO] IMIDAZOLE-4-CARBOXAMIDE ISOMERASE"/>
    <property type="match status" value="1"/>
</dbReference>
<dbReference type="Pfam" id="PF00977">
    <property type="entry name" value="His_biosynth"/>
    <property type="match status" value="1"/>
</dbReference>
<dbReference type="SUPFAM" id="SSF51366">
    <property type="entry name" value="Ribulose-phoshate binding barrel"/>
    <property type="match status" value="1"/>
</dbReference>
<accession>B9KXJ4</accession>
<organism>
    <name type="scientific">Thermomicrobium roseum (strain ATCC 27502 / DSM 5159 / P-2)</name>
    <dbReference type="NCBI Taxonomy" id="309801"/>
    <lineage>
        <taxon>Bacteria</taxon>
        <taxon>Pseudomonadati</taxon>
        <taxon>Thermomicrobiota</taxon>
        <taxon>Thermomicrobia</taxon>
        <taxon>Thermomicrobiales</taxon>
        <taxon>Thermomicrobiaceae</taxon>
        <taxon>Thermomicrobium</taxon>
    </lineage>
</organism>
<reference key="1">
    <citation type="journal article" date="2009" name="PLoS ONE">
        <title>Complete genome sequence of the aerobic CO-oxidizing thermophile Thermomicrobium roseum.</title>
        <authorList>
            <person name="Wu D."/>
            <person name="Raymond J."/>
            <person name="Wu M."/>
            <person name="Chatterji S."/>
            <person name="Ren Q."/>
            <person name="Graham J.E."/>
            <person name="Bryant D.A."/>
            <person name="Robb F."/>
            <person name="Colman A."/>
            <person name="Tallon L.J."/>
            <person name="Badger J.H."/>
            <person name="Madupu R."/>
            <person name="Ward N.L."/>
            <person name="Eisen J.A."/>
        </authorList>
    </citation>
    <scope>NUCLEOTIDE SEQUENCE [LARGE SCALE GENOMIC DNA]</scope>
    <source>
        <strain>ATCC 27502 / DSM 5159 / P-2</strain>
    </source>
</reference>